<feature type="chain" id="PRO_1000199855" description="Urease subunit gamma">
    <location>
        <begin position="1"/>
        <end position="100"/>
    </location>
</feature>
<proteinExistence type="inferred from homology"/>
<evidence type="ECO:0000255" key="1">
    <source>
        <dbReference type="HAMAP-Rule" id="MF_00739"/>
    </source>
</evidence>
<sequence>MKLTPREKDKLLIFTAALLAERRRARGLKLNYPEAVAFITAALMEAARDGKTVAEVMHYGTTLLTRDDVMEGVPEMIPDIQVEATFPDGTKLVTVHHPIP</sequence>
<accession>A9AF70</accession>
<protein>
    <recommendedName>
        <fullName evidence="1">Urease subunit gamma</fullName>
        <ecNumber evidence="1">3.5.1.5</ecNumber>
    </recommendedName>
    <alternativeName>
        <fullName evidence="1">Urea amidohydrolase subunit gamma</fullName>
    </alternativeName>
</protein>
<organism>
    <name type="scientific">Burkholderia multivorans (strain ATCC 17616 / 249)</name>
    <dbReference type="NCBI Taxonomy" id="395019"/>
    <lineage>
        <taxon>Bacteria</taxon>
        <taxon>Pseudomonadati</taxon>
        <taxon>Pseudomonadota</taxon>
        <taxon>Betaproteobacteria</taxon>
        <taxon>Burkholderiales</taxon>
        <taxon>Burkholderiaceae</taxon>
        <taxon>Burkholderia</taxon>
        <taxon>Burkholderia cepacia complex</taxon>
    </lineage>
</organism>
<name>URE3_BURM1</name>
<comment type="catalytic activity">
    <reaction evidence="1">
        <text>urea + 2 H2O + H(+) = hydrogencarbonate + 2 NH4(+)</text>
        <dbReference type="Rhea" id="RHEA:20557"/>
        <dbReference type="ChEBI" id="CHEBI:15377"/>
        <dbReference type="ChEBI" id="CHEBI:15378"/>
        <dbReference type="ChEBI" id="CHEBI:16199"/>
        <dbReference type="ChEBI" id="CHEBI:17544"/>
        <dbReference type="ChEBI" id="CHEBI:28938"/>
        <dbReference type="EC" id="3.5.1.5"/>
    </reaction>
</comment>
<comment type="pathway">
    <text evidence="1">Nitrogen metabolism; urea degradation; CO(2) and NH(3) from urea (urease route): step 1/1.</text>
</comment>
<comment type="subunit">
    <text evidence="1">Heterotrimer of UreA (gamma), UreB (beta) and UreC (alpha) subunits. Three heterotrimers associate to form the active enzyme.</text>
</comment>
<comment type="subcellular location">
    <subcellularLocation>
        <location evidence="1">Cytoplasm</location>
    </subcellularLocation>
</comment>
<comment type="similarity">
    <text evidence="1">Belongs to the urease gamma subunit family.</text>
</comment>
<dbReference type="EC" id="3.5.1.5" evidence="1"/>
<dbReference type="EMBL" id="CP000868">
    <property type="protein sequence ID" value="ABX16172.1"/>
    <property type="molecule type" value="Genomic_DNA"/>
</dbReference>
<dbReference type="EMBL" id="AP009385">
    <property type="protein sequence ID" value="BAG42709.1"/>
    <property type="molecule type" value="Genomic_DNA"/>
</dbReference>
<dbReference type="RefSeq" id="WP_006048588.1">
    <property type="nucleotide sequence ID" value="NC_010804.1"/>
</dbReference>
<dbReference type="SMR" id="A9AF70"/>
<dbReference type="STRING" id="395019.BMULJ_00748"/>
<dbReference type="GeneID" id="97034516"/>
<dbReference type="KEGG" id="bmj:BMULJ_00748"/>
<dbReference type="KEGG" id="bmu:Bmul_2488"/>
<dbReference type="eggNOG" id="COG0831">
    <property type="taxonomic scope" value="Bacteria"/>
</dbReference>
<dbReference type="HOGENOM" id="CLU_145825_1_0_4"/>
<dbReference type="UniPathway" id="UPA00258">
    <property type="reaction ID" value="UER00370"/>
</dbReference>
<dbReference type="Proteomes" id="UP000008815">
    <property type="component" value="Chromosome 1"/>
</dbReference>
<dbReference type="GO" id="GO:0005737">
    <property type="term" value="C:cytoplasm"/>
    <property type="evidence" value="ECO:0007669"/>
    <property type="project" value="UniProtKB-SubCell"/>
</dbReference>
<dbReference type="GO" id="GO:0016151">
    <property type="term" value="F:nickel cation binding"/>
    <property type="evidence" value="ECO:0007669"/>
    <property type="project" value="InterPro"/>
</dbReference>
<dbReference type="GO" id="GO:0009039">
    <property type="term" value="F:urease activity"/>
    <property type="evidence" value="ECO:0007669"/>
    <property type="project" value="UniProtKB-UniRule"/>
</dbReference>
<dbReference type="GO" id="GO:0043419">
    <property type="term" value="P:urea catabolic process"/>
    <property type="evidence" value="ECO:0007669"/>
    <property type="project" value="UniProtKB-UniRule"/>
</dbReference>
<dbReference type="CDD" id="cd00390">
    <property type="entry name" value="Urease_gamma"/>
    <property type="match status" value="1"/>
</dbReference>
<dbReference type="Gene3D" id="3.30.280.10">
    <property type="entry name" value="Urease, gamma-like subunit"/>
    <property type="match status" value="1"/>
</dbReference>
<dbReference type="HAMAP" id="MF_00739">
    <property type="entry name" value="Urease_gamma"/>
    <property type="match status" value="1"/>
</dbReference>
<dbReference type="InterPro" id="IPR012010">
    <property type="entry name" value="Urease_gamma"/>
</dbReference>
<dbReference type="InterPro" id="IPR002026">
    <property type="entry name" value="Urease_gamma/gamma-beta_su"/>
</dbReference>
<dbReference type="InterPro" id="IPR036463">
    <property type="entry name" value="Urease_gamma_sf"/>
</dbReference>
<dbReference type="InterPro" id="IPR050069">
    <property type="entry name" value="Urease_subunit"/>
</dbReference>
<dbReference type="NCBIfam" id="NF009712">
    <property type="entry name" value="PRK13241.1"/>
    <property type="match status" value="1"/>
</dbReference>
<dbReference type="NCBIfam" id="TIGR00193">
    <property type="entry name" value="urease_gam"/>
    <property type="match status" value="1"/>
</dbReference>
<dbReference type="PANTHER" id="PTHR33569">
    <property type="entry name" value="UREASE"/>
    <property type="match status" value="1"/>
</dbReference>
<dbReference type="PANTHER" id="PTHR33569:SF1">
    <property type="entry name" value="UREASE"/>
    <property type="match status" value="1"/>
</dbReference>
<dbReference type="Pfam" id="PF00547">
    <property type="entry name" value="Urease_gamma"/>
    <property type="match status" value="1"/>
</dbReference>
<dbReference type="PIRSF" id="PIRSF001223">
    <property type="entry name" value="Urease_gamma"/>
    <property type="match status" value="1"/>
</dbReference>
<dbReference type="SUPFAM" id="SSF54111">
    <property type="entry name" value="Urease, gamma-subunit"/>
    <property type="match status" value="1"/>
</dbReference>
<keyword id="KW-0963">Cytoplasm</keyword>
<keyword id="KW-0378">Hydrolase</keyword>
<keyword id="KW-1185">Reference proteome</keyword>
<reference key="1">
    <citation type="submission" date="2007-10" db="EMBL/GenBank/DDBJ databases">
        <title>Complete sequence of chromosome 1 of Burkholderia multivorans ATCC 17616.</title>
        <authorList>
            <person name="Copeland A."/>
            <person name="Lucas S."/>
            <person name="Lapidus A."/>
            <person name="Barry K."/>
            <person name="Glavina del Rio T."/>
            <person name="Dalin E."/>
            <person name="Tice H."/>
            <person name="Pitluck S."/>
            <person name="Chain P."/>
            <person name="Malfatti S."/>
            <person name="Shin M."/>
            <person name="Vergez L."/>
            <person name="Schmutz J."/>
            <person name="Larimer F."/>
            <person name="Land M."/>
            <person name="Hauser L."/>
            <person name="Kyrpides N."/>
            <person name="Kim E."/>
            <person name="Tiedje J."/>
            <person name="Richardson P."/>
        </authorList>
    </citation>
    <scope>NUCLEOTIDE SEQUENCE [LARGE SCALE GENOMIC DNA]</scope>
    <source>
        <strain>ATCC 17616 / 249</strain>
    </source>
</reference>
<reference key="2">
    <citation type="submission" date="2007-04" db="EMBL/GenBank/DDBJ databases">
        <title>Complete genome sequence of Burkholderia multivorans ATCC 17616.</title>
        <authorList>
            <person name="Ohtsubo Y."/>
            <person name="Yamashita A."/>
            <person name="Kurokawa K."/>
            <person name="Takami H."/>
            <person name="Yuhara S."/>
            <person name="Nishiyama E."/>
            <person name="Endo R."/>
            <person name="Miyazaki R."/>
            <person name="Ono A."/>
            <person name="Yano K."/>
            <person name="Ito M."/>
            <person name="Sota M."/>
            <person name="Yuji N."/>
            <person name="Hattori M."/>
            <person name="Tsuda M."/>
        </authorList>
    </citation>
    <scope>NUCLEOTIDE SEQUENCE [LARGE SCALE GENOMIC DNA]</scope>
    <source>
        <strain>ATCC 17616 / 249</strain>
    </source>
</reference>
<gene>
    <name evidence="1" type="primary">ureA</name>
    <name type="ordered locus">Bmul_2488</name>
    <name type="ordered locus">BMULJ_00748</name>
</gene>